<protein>
    <recommendedName>
        <fullName>Coiled-coil domain-containing protein 81</fullName>
    </recommendedName>
</protein>
<keyword id="KW-0025">Alternative splicing</keyword>
<keyword id="KW-0175">Coiled coil</keyword>
<keyword id="KW-0963">Cytoplasm</keyword>
<keyword id="KW-0206">Cytoskeleton</keyword>
<keyword id="KW-0597">Phosphoprotein</keyword>
<keyword id="KW-1267">Proteomics identification</keyword>
<keyword id="KW-1185">Reference proteome</keyword>
<proteinExistence type="evidence at protein level"/>
<accession>Q6ZN84</accession>
<accession>A0AVL7</accession>
<accession>Q53FW3</accession>
<accession>Q9H5E5</accession>
<name>CCD81_HUMAN</name>
<dbReference type="EMBL" id="AK027167">
    <property type="protein sequence ID" value="BAB15681.1"/>
    <property type="molecule type" value="mRNA"/>
</dbReference>
<dbReference type="EMBL" id="AK131331">
    <property type="protein sequence ID" value="BAD18491.1"/>
    <property type="molecule type" value="mRNA"/>
</dbReference>
<dbReference type="EMBL" id="AK223168">
    <property type="protein sequence ID" value="BAD96888.1"/>
    <property type="status" value="ALT_INIT"/>
    <property type="molecule type" value="mRNA"/>
</dbReference>
<dbReference type="EMBL" id="BC126412">
    <property type="protein sequence ID" value="AAI26413.1"/>
    <property type="molecule type" value="mRNA"/>
</dbReference>
<dbReference type="CCDS" id="CCDS53691.1">
    <molecule id="Q6ZN84-1"/>
</dbReference>
<dbReference type="CCDS" id="CCDS8276.1">
    <molecule id="Q6ZN84-2"/>
</dbReference>
<dbReference type="RefSeq" id="NP_001149946.1">
    <molecule id="Q6ZN84-1"/>
    <property type="nucleotide sequence ID" value="NM_001156474.2"/>
</dbReference>
<dbReference type="RefSeq" id="NP_068599.3">
    <molecule id="Q6ZN84-2"/>
    <property type="nucleotide sequence ID" value="NM_021827.4"/>
</dbReference>
<dbReference type="SMR" id="Q6ZN84"/>
<dbReference type="BioGRID" id="121925">
    <property type="interactions" value="2"/>
</dbReference>
<dbReference type="FunCoup" id="Q6ZN84">
    <property type="interactions" value="101"/>
</dbReference>
<dbReference type="IntAct" id="Q6ZN84">
    <property type="interactions" value="5"/>
</dbReference>
<dbReference type="STRING" id="9606.ENSP00000415528"/>
<dbReference type="GlyGen" id="Q6ZN84">
    <property type="glycosylation" value="3 sites, 1 O-linked glycan (3 sites)"/>
</dbReference>
<dbReference type="iPTMnet" id="Q6ZN84"/>
<dbReference type="PhosphoSitePlus" id="Q6ZN84"/>
<dbReference type="SwissPalm" id="Q6ZN84"/>
<dbReference type="BioMuta" id="CCDC81"/>
<dbReference type="DMDM" id="148841312"/>
<dbReference type="jPOST" id="Q6ZN84"/>
<dbReference type="MassIVE" id="Q6ZN84"/>
<dbReference type="PaxDb" id="9606-ENSP00000415528"/>
<dbReference type="PeptideAtlas" id="Q6ZN84"/>
<dbReference type="ProteomicsDB" id="67993">
    <molecule id="Q6ZN84-1"/>
</dbReference>
<dbReference type="ProteomicsDB" id="67994">
    <molecule id="Q6ZN84-2"/>
</dbReference>
<dbReference type="ProteomicsDB" id="67995">
    <molecule id="Q6ZN84-3"/>
</dbReference>
<dbReference type="Antibodypedia" id="50011">
    <property type="antibodies" value="100 antibodies from 18 providers"/>
</dbReference>
<dbReference type="DNASU" id="60494"/>
<dbReference type="Ensembl" id="ENST00000354755.5">
    <molecule id="Q6ZN84-2"/>
    <property type="protein sequence ID" value="ENSP00000346800.1"/>
    <property type="gene ID" value="ENSG00000149201.10"/>
</dbReference>
<dbReference type="Ensembl" id="ENST00000445632.7">
    <molecule id="Q6ZN84-1"/>
    <property type="protein sequence ID" value="ENSP00000415528.2"/>
    <property type="gene ID" value="ENSG00000149201.10"/>
</dbReference>
<dbReference type="Ensembl" id="ENST00000528728.1">
    <molecule id="Q6ZN84-3"/>
    <property type="protein sequence ID" value="ENSP00000437165.1"/>
    <property type="gene ID" value="ENSG00000149201.10"/>
</dbReference>
<dbReference type="GeneID" id="60494"/>
<dbReference type="KEGG" id="hsa:60494"/>
<dbReference type="MANE-Select" id="ENST00000445632.7">
    <property type="protein sequence ID" value="ENSP00000415528.2"/>
    <property type="RefSeq nucleotide sequence ID" value="NM_001156474.2"/>
    <property type="RefSeq protein sequence ID" value="NP_001149946.1"/>
</dbReference>
<dbReference type="UCSC" id="uc001pbw.3">
    <molecule id="Q6ZN84-1"/>
    <property type="organism name" value="human"/>
</dbReference>
<dbReference type="AGR" id="HGNC:26281"/>
<dbReference type="CTD" id="60494"/>
<dbReference type="DisGeNET" id="60494"/>
<dbReference type="GeneCards" id="CCDC81"/>
<dbReference type="HGNC" id="HGNC:26281">
    <property type="gene designation" value="CCDC81"/>
</dbReference>
<dbReference type="HPA" id="ENSG00000149201">
    <property type="expression patterns" value="Tissue enhanced (choroid plexus, fallopian tube)"/>
</dbReference>
<dbReference type="neXtProt" id="NX_Q6ZN84"/>
<dbReference type="OpenTargets" id="ENSG00000149201"/>
<dbReference type="PharmGKB" id="PA128394704"/>
<dbReference type="VEuPathDB" id="HostDB:ENSG00000149201"/>
<dbReference type="eggNOG" id="ENOG502QT76">
    <property type="taxonomic scope" value="Eukaryota"/>
</dbReference>
<dbReference type="GeneTree" id="ENSGT00390000011985"/>
<dbReference type="HOGENOM" id="CLU_020603_0_0_1"/>
<dbReference type="InParanoid" id="Q6ZN84"/>
<dbReference type="OMA" id="QCEKYPR"/>
<dbReference type="OrthoDB" id="125906at2759"/>
<dbReference type="PAN-GO" id="Q6ZN84">
    <property type="GO annotations" value="1 GO annotation based on evolutionary models"/>
</dbReference>
<dbReference type="PhylomeDB" id="Q6ZN84"/>
<dbReference type="TreeFam" id="TF336185"/>
<dbReference type="PathwayCommons" id="Q6ZN84"/>
<dbReference type="SignaLink" id="Q6ZN84"/>
<dbReference type="BioGRID-ORCS" id="60494">
    <property type="hits" value="8 hits in 1148 CRISPR screens"/>
</dbReference>
<dbReference type="ChiTaRS" id="CCDC81">
    <property type="organism name" value="human"/>
</dbReference>
<dbReference type="GenomeRNAi" id="60494"/>
<dbReference type="Pharos" id="Q6ZN84">
    <property type="development level" value="Tdark"/>
</dbReference>
<dbReference type="PRO" id="PR:Q6ZN84"/>
<dbReference type="Proteomes" id="UP000005640">
    <property type="component" value="Chromosome 11"/>
</dbReference>
<dbReference type="RNAct" id="Q6ZN84">
    <property type="molecule type" value="protein"/>
</dbReference>
<dbReference type="Bgee" id="ENSG00000149201">
    <property type="expression patterns" value="Expressed in right uterine tube and 106 other cell types or tissues"/>
</dbReference>
<dbReference type="ExpressionAtlas" id="Q6ZN84">
    <property type="expression patterns" value="baseline and differential"/>
</dbReference>
<dbReference type="GO" id="GO:0005813">
    <property type="term" value="C:centrosome"/>
    <property type="evidence" value="ECO:0000314"/>
    <property type="project" value="UniProtKB"/>
</dbReference>
<dbReference type="GO" id="GO:0036064">
    <property type="term" value="C:ciliary basal body"/>
    <property type="evidence" value="ECO:0000314"/>
    <property type="project" value="HPA"/>
</dbReference>
<dbReference type="GO" id="GO:0005737">
    <property type="term" value="C:cytoplasm"/>
    <property type="evidence" value="ECO:0007669"/>
    <property type="project" value="UniProtKB-KW"/>
</dbReference>
<dbReference type="GO" id="GO:0005815">
    <property type="term" value="C:microtubule organizing center"/>
    <property type="evidence" value="ECO:0000318"/>
    <property type="project" value="GO_Central"/>
</dbReference>
<dbReference type="GO" id="GO:0005886">
    <property type="term" value="C:plasma membrane"/>
    <property type="evidence" value="ECO:0000314"/>
    <property type="project" value="HPA"/>
</dbReference>
<dbReference type="InterPro" id="IPR040673">
    <property type="entry name" value="CCDC81_HU_dom_2"/>
</dbReference>
<dbReference type="InterPro" id="IPR026295">
    <property type="entry name" value="Coiled-coil_dom_cont_p_81"/>
</dbReference>
<dbReference type="InterPro" id="IPR028034">
    <property type="entry name" value="HU-CCDC81"/>
</dbReference>
<dbReference type="PANTHER" id="PTHR14362">
    <property type="entry name" value="COILED-COIL DOMAIN-CONTAINING PROTEIN 81"/>
    <property type="match status" value="1"/>
</dbReference>
<dbReference type="PANTHER" id="PTHR14362:SF2">
    <property type="entry name" value="COILED-COIL DOMAIN-CONTAINING PROTEIN 81"/>
    <property type="match status" value="1"/>
</dbReference>
<dbReference type="Pfam" id="PF14908">
    <property type="entry name" value="HU-CCDC81_euk_1"/>
    <property type="match status" value="1"/>
</dbReference>
<dbReference type="Pfam" id="PF18289">
    <property type="entry name" value="HU-CCDC81_euk_2"/>
    <property type="match status" value="1"/>
</dbReference>
<feature type="chain" id="PRO_0000288877" description="Coiled-coil domain-containing protein 81">
    <location>
        <begin position="1"/>
        <end position="652"/>
    </location>
</feature>
<feature type="region of interest" description="Disordered" evidence="3">
    <location>
        <begin position="238"/>
        <end position="258"/>
    </location>
</feature>
<feature type="coiled-coil region" evidence="2">
    <location>
        <begin position="436"/>
        <end position="493"/>
    </location>
</feature>
<feature type="compositionally biased region" description="Basic and acidic residues" evidence="3">
    <location>
        <begin position="238"/>
        <end position="256"/>
    </location>
</feature>
<feature type="modified residue" description="Phosphoserine" evidence="1">
    <location>
        <position position="206"/>
    </location>
</feature>
<feature type="modified residue" description="Phosphoserine" evidence="1">
    <location>
        <position position="275"/>
    </location>
</feature>
<feature type="modified residue" description="Phosphoserine" evidence="1">
    <location>
        <position position="296"/>
    </location>
</feature>
<feature type="modified residue" description="Phosphoserine" evidence="1">
    <location>
        <position position="417"/>
    </location>
</feature>
<feature type="splice variant" id="VSP_025805" description="In isoform 3." evidence="5 6">
    <location>
        <begin position="1"/>
        <end position="217"/>
    </location>
</feature>
<feature type="splice variant" id="VSP_025806" description="In isoform 2." evidence="5">
    <location>
        <begin position="96"/>
        <end position="185"/>
    </location>
</feature>
<feature type="splice variant" id="VSP_025807" description="In isoform 3." evidence="5 6">
    <location>
        <begin position="324"/>
        <end position="371"/>
    </location>
</feature>
<feature type="sequence variant" id="VAR_032524" description="In dbSNP:rs3741005.">
    <original>Y</original>
    <variation>C</variation>
    <location>
        <position position="449"/>
    </location>
</feature>
<feature type="sequence conflict" description="In Ref. 1; BAD18491." evidence="7" ref="1">
    <original>E</original>
    <variation>G</variation>
    <location>
        <position position="83"/>
    </location>
</feature>
<feature type="sequence conflict" description="In Ref. 1; BAB15681." evidence="7" ref="1">
    <original>K</original>
    <variation>I</variation>
    <location>
        <position position="407"/>
    </location>
</feature>
<organism>
    <name type="scientific">Homo sapiens</name>
    <name type="common">Human</name>
    <dbReference type="NCBI Taxonomy" id="9606"/>
    <lineage>
        <taxon>Eukaryota</taxon>
        <taxon>Metazoa</taxon>
        <taxon>Chordata</taxon>
        <taxon>Craniata</taxon>
        <taxon>Vertebrata</taxon>
        <taxon>Euteleostomi</taxon>
        <taxon>Mammalia</taxon>
        <taxon>Eutheria</taxon>
        <taxon>Euarchontoglires</taxon>
        <taxon>Primates</taxon>
        <taxon>Haplorrhini</taxon>
        <taxon>Catarrhini</taxon>
        <taxon>Hominidae</taxon>
        <taxon>Homo</taxon>
    </lineage>
</organism>
<evidence type="ECO:0000250" key="1">
    <source>
        <dbReference type="UniProtKB" id="Q5XIN9"/>
    </source>
</evidence>
<evidence type="ECO:0000255" key="2"/>
<evidence type="ECO:0000256" key="3">
    <source>
        <dbReference type="SAM" id="MobiDB-lite"/>
    </source>
</evidence>
<evidence type="ECO:0000269" key="4">
    <source>
    </source>
</evidence>
<evidence type="ECO:0000303" key="5">
    <source>
    </source>
</evidence>
<evidence type="ECO:0000303" key="6">
    <source ref="2"/>
</evidence>
<evidence type="ECO:0000305" key="7"/>
<reference key="1">
    <citation type="journal article" date="2004" name="Nat. Genet.">
        <title>Complete sequencing and characterization of 21,243 full-length human cDNAs.</title>
        <authorList>
            <person name="Ota T."/>
            <person name="Suzuki Y."/>
            <person name="Nishikawa T."/>
            <person name="Otsuki T."/>
            <person name="Sugiyama T."/>
            <person name="Irie R."/>
            <person name="Wakamatsu A."/>
            <person name="Hayashi K."/>
            <person name="Sato H."/>
            <person name="Nagai K."/>
            <person name="Kimura K."/>
            <person name="Makita H."/>
            <person name="Sekine M."/>
            <person name="Obayashi M."/>
            <person name="Nishi T."/>
            <person name="Shibahara T."/>
            <person name="Tanaka T."/>
            <person name="Ishii S."/>
            <person name="Yamamoto J."/>
            <person name="Saito K."/>
            <person name="Kawai Y."/>
            <person name="Isono Y."/>
            <person name="Nakamura Y."/>
            <person name="Nagahari K."/>
            <person name="Murakami K."/>
            <person name="Yasuda T."/>
            <person name="Iwayanagi T."/>
            <person name="Wagatsuma M."/>
            <person name="Shiratori A."/>
            <person name="Sudo H."/>
            <person name="Hosoiri T."/>
            <person name="Kaku Y."/>
            <person name="Kodaira H."/>
            <person name="Kondo H."/>
            <person name="Sugawara M."/>
            <person name="Takahashi M."/>
            <person name="Kanda K."/>
            <person name="Yokoi T."/>
            <person name="Furuya T."/>
            <person name="Kikkawa E."/>
            <person name="Omura Y."/>
            <person name="Abe K."/>
            <person name="Kamihara K."/>
            <person name="Katsuta N."/>
            <person name="Sato K."/>
            <person name="Tanikawa M."/>
            <person name="Yamazaki M."/>
            <person name="Ninomiya K."/>
            <person name="Ishibashi T."/>
            <person name="Yamashita H."/>
            <person name="Murakawa K."/>
            <person name="Fujimori K."/>
            <person name="Tanai H."/>
            <person name="Kimata M."/>
            <person name="Watanabe M."/>
            <person name="Hiraoka S."/>
            <person name="Chiba Y."/>
            <person name="Ishida S."/>
            <person name="Ono Y."/>
            <person name="Takiguchi S."/>
            <person name="Watanabe S."/>
            <person name="Yosida M."/>
            <person name="Hotuta T."/>
            <person name="Kusano J."/>
            <person name="Kanehori K."/>
            <person name="Takahashi-Fujii A."/>
            <person name="Hara H."/>
            <person name="Tanase T.-O."/>
            <person name="Nomura Y."/>
            <person name="Togiya S."/>
            <person name="Komai F."/>
            <person name="Hara R."/>
            <person name="Takeuchi K."/>
            <person name="Arita M."/>
            <person name="Imose N."/>
            <person name="Musashino K."/>
            <person name="Yuuki H."/>
            <person name="Oshima A."/>
            <person name="Sasaki N."/>
            <person name="Aotsuka S."/>
            <person name="Yoshikawa Y."/>
            <person name="Matsunawa H."/>
            <person name="Ichihara T."/>
            <person name="Shiohata N."/>
            <person name="Sano S."/>
            <person name="Moriya S."/>
            <person name="Momiyama H."/>
            <person name="Satoh N."/>
            <person name="Takami S."/>
            <person name="Terashima Y."/>
            <person name="Suzuki O."/>
            <person name="Nakagawa S."/>
            <person name="Senoh A."/>
            <person name="Mizoguchi H."/>
            <person name="Goto Y."/>
            <person name="Shimizu F."/>
            <person name="Wakebe H."/>
            <person name="Hishigaki H."/>
            <person name="Watanabe T."/>
            <person name="Sugiyama A."/>
            <person name="Takemoto M."/>
            <person name="Kawakami B."/>
            <person name="Yamazaki M."/>
            <person name="Watanabe K."/>
            <person name="Kumagai A."/>
            <person name="Itakura S."/>
            <person name="Fukuzumi Y."/>
            <person name="Fujimori Y."/>
            <person name="Komiyama M."/>
            <person name="Tashiro H."/>
            <person name="Tanigami A."/>
            <person name="Fujiwara T."/>
            <person name="Ono T."/>
            <person name="Yamada K."/>
            <person name="Fujii Y."/>
            <person name="Ozaki K."/>
            <person name="Hirao M."/>
            <person name="Ohmori Y."/>
            <person name="Kawabata A."/>
            <person name="Hikiji T."/>
            <person name="Kobatake N."/>
            <person name="Inagaki H."/>
            <person name="Ikema Y."/>
            <person name="Okamoto S."/>
            <person name="Okitani R."/>
            <person name="Kawakami T."/>
            <person name="Noguchi S."/>
            <person name="Itoh T."/>
            <person name="Shigeta K."/>
            <person name="Senba T."/>
            <person name="Matsumura K."/>
            <person name="Nakajima Y."/>
            <person name="Mizuno T."/>
            <person name="Morinaga M."/>
            <person name="Sasaki M."/>
            <person name="Togashi T."/>
            <person name="Oyama M."/>
            <person name="Hata H."/>
            <person name="Watanabe M."/>
            <person name="Komatsu T."/>
            <person name="Mizushima-Sugano J."/>
            <person name="Satoh T."/>
            <person name="Shirai Y."/>
            <person name="Takahashi Y."/>
            <person name="Nakagawa K."/>
            <person name="Okumura K."/>
            <person name="Nagase T."/>
            <person name="Nomura N."/>
            <person name="Kikuchi H."/>
            <person name="Masuho Y."/>
            <person name="Yamashita R."/>
            <person name="Nakai K."/>
            <person name="Yada T."/>
            <person name="Nakamura Y."/>
            <person name="Ohara O."/>
            <person name="Isogai T."/>
            <person name="Sugano S."/>
        </authorList>
    </citation>
    <scope>NUCLEOTIDE SEQUENCE [LARGE SCALE MRNA] (ISOFORMS 2 AND 3)</scope>
    <source>
        <tissue>Lung</tissue>
        <tissue>Testis</tissue>
    </source>
</reference>
<reference key="2">
    <citation type="submission" date="2005-04" db="EMBL/GenBank/DDBJ databases">
        <authorList>
            <person name="Suzuki Y."/>
            <person name="Sugano S."/>
            <person name="Totoki Y."/>
            <person name="Toyoda A."/>
            <person name="Takeda T."/>
            <person name="Sakaki Y."/>
            <person name="Tanaka A."/>
            <person name="Yokoyama S."/>
        </authorList>
    </citation>
    <scope>NUCLEOTIDE SEQUENCE [LARGE SCALE MRNA] (ISOFORM 3)</scope>
    <source>
        <tissue>Lung</tissue>
    </source>
</reference>
<reference key="3">
    <citation type="journal article" date="2004" name="Genome Res.">
        <title>The status, quality, and expansion of the NIH full-length cDNA project: the Mammalian Gene Collection (MGC).</title>
        <authorList>
            <consortium name="The MGC Project Team"/>
        </authorList>
    </citation>
    <scope>NUCLEOTIDE SEQUENCE [LARGE SCALE MRNA] (ISOFORM 1)</scope>
    <source>
        <tissue>Lung</tissue>
    </source>
</reference>
<reference key="4">
    <citation type="journal article" date="2014" name="J. Cell Sci.">
        <title>Proteomic analysis of mammalian sperm cells identifies new components of the centrosome.</title>
        <authorList>
            <person name="Firat-Karalar E.N."/>
            <person name="Sante J."/>
            <person name="Elliott S."/>
            <person name="Stearns T."/>
        </authorList>
    </citation>
    <scope>SUBCELLULAR LOCATION</scope>
</reference>
<sequence length="652" mass="76084">MLDTIARALQDLGRQVLPTLPSLSQEEVSIIWGNVSEFVRRQLTLHKGVQIPAFGTFTFIRQKLEVGNNKFILIQRPVFIMVEKLVQIHGLKQNKVYTPGEIPIVPLNFVMISLEGPFNRDVVEGCVKETLLFLSRSISMKQNVEFTFKGIGVLMIRDSKVKMRFYKDFLCTMDGSGALAKALANRPGTVDSVLSSREALRKWPSSVLAFPRIELKEMENKLPMETLVEECGENRERKCKLKDQSDKEEGTRDISSPKRLRDRQALFPAKVTNVSLLEKFERSESGGKIMTPESLSYPSCLKHDSEMKPQTSPACQDHNKAGQEMCYVCLQRAQRNSLLYYSEERRREIEDERLIQQYQMLKDQEALFRHQMKSLATREQNQKNAAYNLGVAEAIRNHKNEKPEFYKSFLFDKRPLSPALNALKQEEYSRSLLKQMDNRQENEIKQRQYRELMDRLEQVQLTEELAAQRAKFLKDKMEETQCYKRALDAQIKNKPSRLPPFEPDSSEPIFGKNEGELMVEKQKREQNYMKHQLEAAANHKRKAILHQLVDQRRDLQMLQRTQREHLADRTAELERVNRVNQCLQEDWERSAAMKKQRDLEDKAFERASDKLFLLDQCEKYRRCKQCQRRTSNVGESNLWPLNKFLPGSRLLV</sequence>
<gene>
    <name type="primary">CCDC81</name>
</gene>
<comment type="interaction">
    <interactant intactId="EBI-14404745">
        <id>Q6ZN84</id>
    </interactant>
    <interactant intactId="EBI-2872510">
        <id>Q6UWF3</id>
        <label>SCIMP</label>
    </interactant>
    <organismsDiffer>false</organismsDiffer>
    <experiments>5</experiments>
</comment>
<comment type="subcellular location">
    <subcellularLocation>
        <location evidence="4">Cytoplasm</location>
        <location evidence="4">Cytoskeleton</location>
        <location evidence="4">Microtubule organizing center</location>
        <location evidence="4">Centrosome</location>
    </subcellularLocation>
</comment>
<comment type="alternative products">
    <event type="alternative splicing"/>
    <isoform>
        <id>Q6ZN84-1</id>
        <name>1</name>
        <sequence type="displayed"/>
    </isoform>
    <isoform>
        <id>Q6ZN84-2</id>
        <name>2</name>
        <sequence type="described" ref="VSP_025806"/>
    </isoform>
    <isoform>
        <id>Q6ZN84-3</id>
        <name>3</name>
        <sequence type="described" ref="VSP_025805 VSP_025807"/>
    </isoform>
</comment>
<comment type="sequence caution" evidence="7">
    <conflict type="erroneous initiation">
        <sequence resource="EMBL-CDS" id="BAD96888"/>
    </conflict>
</comment>